<sequence>MQTSPLLESLMEALRCLPGVGPKSAQRMAFQLLQRDRSGGMRLAQSLTRAMSEIGHCADCRTFTEQEHCTICSNPRRQQNGQICVVESPADIHAIEQTGQFGGRYFVLMGHLSPMDGIGPGDIGLDLLEKRLETETISEVILATNPTVEGDATANYIGQMCGQYGVLASRIAHGVPVGGELEMVDGTTLSHSLAGRNPIKY</sequence>
<keyword id="KW-0227">DNA damage</keyword>
<keyword id="KW-0233">DNA recombination</keyword>
<keyword id="KW-0234">DNA repair</keyword>
<keyword id="KW-0479">Metal-binding</keyword>
<keyword id="KW-0862">Zinc</keyword>
<keyword id="KW-0863">Zinc-finger</keyword>
<protein>
    <recommendedName>
        <fullName evidence="1">Recombination protein RecR</fullName>
    </recommendedName>
</protein>
<gene>
    <name evidence="1" type="primary">recR</name>
    <name type="ordered locus">YE3091</name>
</gene>
<evidence type="ECO:0000255" key="1">
    <source>
        <dbReference type="HAMAP-Rule" id="MF_00017"/>
    </source>
</evidence>
<proteinExistence type="inferred from homology"/>
<comment type="function">
    <text evidence="1">May play a role in DNA repair. It seems to be involved in an RecBC-independent recombinational process of DNA repair. It may act with RecF and RecO.</text>
</comment>
<comment type="similarity">
    <text evidence="1">Belongs to the RecR family.</text>
</comment>
<organism>
    <name type="scientific">Yersinia enterocolitica serotype O:8 / biotype 1B (strain NCTC 13174 / 8081)</name>
    <dbReference type="NCBI Taxonomy" id="393305"/>
    <lineage>
        <taxon>Bacteria</taxon>
        <taxon>Pseudomonadati</taxon>
        <taxon>Pseudomonadota</taxon>
        <taxon>Gammaproteobacteria</taxon>
        <taxon>Enterobacterales</taxon>
        <taxon>Yersiniaceae</taxon>
        <taxon>Yersinia</taxon>
    </lineage>
</organism>
<reference key="1">
    <citation type="journal article" date="2006" name="PLoS Genet.">
        <title>The complete genome sequence and comparative genome analysis of the high pathogenicity Yersinia enterocolitica strain 8081.</title>
        <authorList>
            <person name="Thomson N.R."/>
            <person name="Howard S."/>
            <person name="Wren B.W."/>
            <person name="Holden M.T.G."/>
            <person name="Crossman L."/>
            <person name="Challis G.L."/>
            <person name="Churcher C."/>
            <person name="Mungall K."/>
            <person name="Brooks K."/>
            <person name="Chillingworth T."/>
            <person name="Feltwell T."/>
            <person name="Abdellah Z."/>
            <person name="Hauser H."/>
            <person name="Jagels K."/>
            <person name="Maddison M."/>
            <person name="Moule S."/>
            <person name="Sanders M."/>
            <person name="Whitehead S."/>
            <person name="Quail M.A."/>
            <person name="Dougan G."/>
            <person name="Parkhill J."/>
            <person name="Prentice M.B."/>
        </authorList>
    </citation>
    <scope>NUCLEOTIDE SEQUENCE [LARGE SCALE GENOMIC DNA]</scope>
    <source>
        <strain>NCTC 13174 / 8081</strain>
    </source>
</reference>
<feature type="chain" id="PRO_1000001636" description="Recombination protein RecR">
    <location>
        <begin position="1"/>
        <end position="201"/>
    </location>
</feature>
<feature type="domain" description="Toprim" evidence="1">
    <location>
        <begin position="81"/>
        <end position="176"/>
    </location>
</feature>
<feature type="zinc finger region" description="C4-type" evidence="1">
    <location>
        <begin position="57"/>
        <end position="72"/>
    </location>
</feature>
<accession>A1JNB5</accession>
<name>RECR_YERE8</name>
<dbReference type="EMBL" id="AM286415">
    <property type="protein sequence ID" value="CAL13126.1"/>
    <property type="molecule type" value="Genomic_DNA"/>
</dbReference>
<dbReference type="RefSeq" id="WP_005158177.1">
    <property type="nucleotide sequence ID" value="NC_008800.1"/>
</dbReference>
<dbReference type="RefSeq" id="YP_001007273.1">
    <property type="nucleotide sequence ID" value="NC_008800.1"/>
</dbReference>
<dbReference type="SMR" id="A1JNB5"/>
<dbReference type="GeneID" id="31410035"/>
<dbReference type="KEGG" id="yen:YE3091"/>
<dbReference type="PATRIC" id="fig|393305.7.peg.3289"/>
<dbReference type="eggNOG" id="COG0353">
    <property type="taxonomic scope" value="Bacteria"/>
</dbReference>
<dbReference type="HOGENOM" id="CLU_060739_1_2_6"/>
<dbReference type="OrthoDB" id="9802672at2"/>
<dbReference type="Proteomes" id="UP000000642">
    <property type="component" value="Chromosome"/>
</dbReference>
<dbReference type="GO" id="GO:0003677">
    <property type="term" value="F:DNA binding"/>
    <property type="evidence" value="ECO:0007669"/>
    <property type="project" value="UniProtKB-UniRule"/>
</dbReference>
<dbReference type="GO" id="GO:0008270">
    <property type="term" value="F:zinc ion binding"/>
    <property type="evidence" value="ECO:0007669"/>
    <property type="project" value="UniProtKB-KW"/>
</dbReference>
<dbReference type="GO" id="GO:0006310">
    <property type="term" value="P:DNA recombination"/>
    <property type="evidence" value="ECO:0007669"/>
    <property type="project" value="UniProtKB-UniRule"/>
</dbReference>
<dbReference type="GO" id="GO:0006281">
    <property type="term" value="P:DNA repair"/>
    <property type="evidence" value="ECO:0007669"/>
    <property type="project" value="UniProtKB-UniRule"/>
</dbReference>
<dbReference type="CDD" id="cd01025">
    <property type="entry name" value="TOPRIM_recR"/>
    <property type="match status" value="1"/>
</dbReference>
<dbReference type="FunFam" id="1.10.8.420:FF:000001">
    <property type="entry name" value="Recombination protein RecR"/>
    <property type="match status" value="1"/>
</dbReference>
<dbReference type="FunFam" id="3.40.1360.10:FF:000001">
    <property type="entry name" value="Recombination protein RecR"/>
    <property type="match status" value="1"/>
</dbReference>
<dbReference type="Gene3D" id="3.40.1360.10">
    <property type="match status" value="1"/>
</dbReference>
<dbReference type="Gene3D" id="6.10.250.240">
    <property type="match status" value="1"/>
</dbReference>
<dbReference type="Gene3D" id="1.10.8.420">
    <property type="entry name" value="RecR Domain 1"/>
    <property type="match status" value="1"/>
</dbReference>
<dbReference type="HAMAP" id="MF_00017">
    <property type="entry name" value="RecR"/>
    <property type="match status" value="1"/>
</dbReference>
<dbReference type="InterPro" id="IPR000093">
    <property type="entry name" value="DNA_Rcmb_RecR"/>
</dbReference>
<dbReference type="InterPro" id="IPR023627">
    <property type="entry name" value="Rcmb_RecR"/>
</dbReference>
<dbReference type="InterPro" id="IPR015967">
    <property type="entry name" value="Rcmb_RecR_Znf"/>
</dbReference>
<dbReference type="InterPro" id="IPR006171">
    <property type="entry name" value="TOPRIM_dom"/>
</dbReference>
<dbReference type="InterPro" id="IPR034137">
    <property type="entry name" value="TOPRIM_RecR"/>
</dbReference>
<dbReference type="NCBIfam" id="TIGR00615">
    <property type="entry name" value="recR"/>
    <property type="match status" value="1"/>
</dbReference>
<dbReference type="PANTHER" id="PTHR30446">
    <property type="entry name" value="RECOMBINATION PROTEIN RECR"/>
    <property type="match status" value="1"/>
</dbReference>
<dbReference type="PANTHER" id="PTHR30446:SF0">
    <property type="entry name" value="RECOMBINATION PROTEIN RECR"/>
    <property type="match status" value="1"/>
</dbReference>
<dbReference type="Pfam" id="PF21175">
    <property type="entry name" value="RecR_C"/>
    <property type="match status" value="1"/>
</dbReference>
<dbReference type="Pfam" id="PF21176">
    <property type="entry name" value="RecR_HhH"/>
    <property type="match status" value="1"/>
</dbReference>
<dbReference type="Pfam" id="PF02132">
    <property type="entry name" value="RecR_ZnF"/>
    <property type="match status" value="1"/>
</dbReference>
<dbReference type="Pfam" id="PF13662">
    <property type="entry name" value="Toprim_4"/>
    <property type="match status" value="1"/>
</dbReference>
<dbReference type="SMART" id="SM00493">
    <property type="entry name" value="TOPRIM"/>
    <property type="match status" value="1"/>
</dbReference>
<dbReference type="SUPFAM" id="SSF111304">
    <property type="entry name" value="Recombination protein RecR"/>
    <property type="match status" value="1"/>
</dbReference>
<dbReference type="PROSITE" id="PS01300">
    <property type="entry name" value="RECR"/>
    <property type="match status" value="1"/>
</dbReference>
<dbReference type="PROSITE" id="PS50880">
    <property type="entry name" value="TOPRIM"/>
    <property type="match status" value="1"/>
</dbReference>